<proteinExistence type="inferred from homology"/>
<dbReference type="EMBL" id="AE016830">
    <property type="protein sequence ID" value="AAO80736.1"/>
    <property type="molecule type" value="Genomic_DNA"/>
</dbReference>
<dbReference type="RefSeq" id="NP_814666.1">
    <property type="nucleotide sequence ID" value="NC_004668.1"/>
</dbReference>
<dbReference type="RefSeq" id="WP_002355811.1">
    <property type="nucleotide sequence ID" value="NZ_KE136527.1"/>
</dbReference>
<dbReference type="SMR" id="Q837B5"/>
<dbReference type="STRING" id="226185.EF_0928"/>
<dbReference type="DNASU" id="1199817"/>
<dbReference type="EnsemblBacteria" id="AAO80736">
    <property type="protein sequence ID" value="AAO80736"/>
    <property type="gene ID" value="EF_0928"/>
</dbReference>
<dbReference type="KEGG" id="efa:EF0928"/>
<dbReference type="PATRIC" id="fig|226185.45.peg.3136"/>
<dbReference type="eggNOG" id="COG4975">
    <property type="taxonomic scope" value="Bacteria"/>
</dbReference>
<dbReference type="HOGENOM" id="CLU_076024_0_0_9"/>
<dbReference type="Proteomes" id="UP000001415">
    <property type="component" value="Chromosome"/>
</dbReference>
<dbReference type="GO" id="GO:0005886">
    <property type="term" value="C:plasma membrane"/>
    <property type="evidence" value="ECO:0007669"/>
    <property type="project" value="UniProtKB-SubCell"/>
</dbReference>
<dbReference type="GO" id="GO:0015144">
    <property type="term" value="F:carbohydrate transmembrane transporter activity"/>
    <property type="evidence" value="ECO:0007669"/>
    <property type="project" value="InterPro"/>
</dbReference>
<dbReference type="Gene3D" id="1.10.3730.20">
    <property type="match status" value="1"/>
</dbReference>
<dbReference type="InterPro" id="IPR010651">
    <property type="entry name" value="Sugar_transport"/>
</dbReference>
<dbReference type="PANTHER" id="PTHR16119">
    <property type="entry name" value="TRANSMEMBRANE PROTEIN 144"/>
    <property type="match status" value="1"/>
</dbReference>
<dbReference type="PANTHER" id="PTHR16119:SF17">
    <property type="entry name" value="TRANSMEMBRANE PROTEIN 144"/>
    <property type="match status" value="1"/>
</dbReference>
<dbReference type="Pfam" id="PF06800">
    <property type="entry name" value="Sugar_transport"/>
    <property type="match status" value="1"/>
</dbReference>
<dbReference type="SUPFAM" id="SSF103481">
    <property type="entry name" value="Multidrug resistance efflux transporter EmrE"/>
    <property type="match status" value="2"/>
</dbReference>
<evidence type="ECO:0000255" key="1"/>
<evidence type="ECO:0000305" key="2"/>
<gene>
    <name type="ordered locus">EF_0928</name>
</gene>
<protein>
    <recommendedName>
        <fullName>Putative sugar uptake protein EF_0928</fullName>
    </recommendedName>
</protein>
<name>Y928_ENTFA</name>
<keyword id="KW-1003">Cell membrane</keyword>
<keyword id="KW-0472">Membrane</keyword>
<keyword id="KW-1185">Reference proteome</keyword>
<keyword id="KW-0762">Sugar transport</keyword>
<keyword id="KW-0812">Transmembrane</keyword>
<keyword id="KW-1133">Transmembrane helix</keyword>
<keyword id="KW-0813">Transport</keyword>
<reference key="1">
    <citation type="journal article" date="2003" name="Science">
        <title>Role of mobile DNA in the evolution of vancomycin-resistant Enterococcus faecalis.</title>
        <authorList>
            <person name="Paulsen I.T."/>
            <person name="Banerjei L."/>
            <person name="Myers G.S.A."/>
            <person name="Nelson K.E."/>
            <person name="Seshadri R."/>
            <person name="Read T.D."/>
            <person name="Fouts D.E."/>
            <person name="Eisen J.A."/>
            <person name="Gill S.R."/>
            <person name="Heidelberg J.F."/>
            <person name="Tettelin H."/>
            <person name="Dodson R.J."/>
            <person name="Umayam L.A."/>
            <person name="Brinkac L.M."/>
            <person name="Beanan M.J."/>
            <person name="Daugherty S.C."/>
            <person name="DeBoy R.T."/>
            <person name="Durkin S.A."/>
            <person name="Kolonay J.F."/>
            <person name="Madupu R."/>
            <person name="Nelson W.C."/>
            <person name="Vamathevan J.J."/>
            <person name="Tran B."/>
            <person name="Upton J."/>
            <person name="Hansen T."/>
            <person name="Shetty J."/>
            <person name="Khouri H.M."/>
            <person name="Utterback T.R."/>
            <person name="Radune D."/>
            <person name="Ketchum K.A."/>
            <person name="Dougherty B.A."/>
            <person name="Fraser C.M."/>
        </authorList>
    </citation>
    <scope>NUCLEOTIDE SEQUENCE [LARGE SCALE GENOMIC DNA]</scope>
    <source>
        <strain>ATCC 700802 / V583</strain>
    </source>
</reference>
<sequence length="287" mass="31127">MSLLIALVPMIAWGSIGLVSGKIGGSANQQTLGMTIGALLFSIVVFFVIQPTLTTATLIVGFISGLFWSLGQNQQFHSMKYMGVSVGLPISTGMQLVVNTVAGAVFFHEWTKTKDFVVGFIALAFLVFGVYLTARQDDDSQPKTSNSMLDFNKGIRALIFSTVGYGVYTIIINATGLDPWGIILPQSIGMLVGASFFAFKKVKVDRFVWMNMTTGLLWGLGNICMLLTMREIGLAISFSLSQMGIIISTLGGIFLLGERKSKKEMFYVIFGCIFVILGGILLGYMKA</sequence>
<organism>
    <name type="scientific">Enterococcus faecalis (strain ATCC 700802 / V583)</name>
    <dbReference type="NCBI Taxonomy" id="226185"/>
    <lineage>
        <taxon>Bacteria</taxon>
        <taxon>Bacillati</taxon>
        <taxon>Bacillota</taxon>
        <taxon>Bacilli</taxon>
        <taxon>Lactobacillales</taxon>
        <taxon>Enterococcaceae</taxon>
        <taxon>Enterococcus</taxon>
    </lineage>
</organism>
<feature type="chain" id="PRO_0000213648" description="Putative sugar uptake protein EF_0928">
    <location>
        <begin position="1"/>
        <end position="287"/>
    </location>
</feature>
<feature type="transmembrane region" description="Helical" evidence="1">
    <location>
        <begin position="5"/>
        <end position="27"/>
    </location>
</feature>
<feature type="transmembrane region" description="Helical" evidence="1">
    <location>
        <begin position="32"/>
        <end position="49"/>
    </location>
</feature>
<feature type="transmembrane region" description="Helical" evidence="1">
    <location>
        <begin position="53"/>
        <end position="71"/>
    </location>
</feature>
<feature type="transmembrane region" description="Helical" evidence="1">
    <location>
        <begin position="84"/>
        <end position="106"/>
    </location>
</feature>
<feature type="transmembrane region" description="Helical" evidence="1">
    <location>
        <begin position="116"/>
        <end position="134"/>
    </location>
</feature>
<feature type="transmembrane region" description="Helical" evidence="1">
    <location>
        <begin position="155"/>
        <end position="177"/>
    </location>
</feature>
<feature type="transmembrane region" description="Helical" evidence="1">
    <location>
        <begin position="182"/>
        <end position="200"/>
    </location>
</feature>
<feature type="transmembrane region" description="Helical" evidence="1">
    <location>
        <begin position="207"/>
        <end position="229"/>
    </location>
</feature>
<feature type="transmembrane region" description="Helical" evidence="1">
    <location>
        <begin position="234"/>
        <end position="256"/>
    </location>
</feature>
<feature type="transmembrane region" description="Helical" evidence="1">
    <location>
        <begin position="265"/>
        <end position="284"/>
    </location>
</feature>
<accession>Q837B5</accession>
<comment type="subcellular location">
    <subcellularLocation>
        <location evidence="2">Cell membrane</location>
        <topology evidence="2">Multi-pass membrane protein</topology>
    </subcellularLocation>
</comment>
<comment type="similarity">
    <text evidence="2">Belongs to the GRP transporter (TC 2.A.7.5) family.</text>
</comment>